<keyword id="KW-0007">Acetylation</keyword>
<keyword id="KW-0053">Apoptosis</keyword>
<keyword id="KW-0067">ATP-binding</keyword>
<keyword id="KW-0347">Helicase</keyword>
<keyword id="KW-0378">Hydrolase</keyword>
<keyword id="KW-0507">mRNA processing</keyword>
<keyword id="KW-0508">mRNA splicing</keyword>
<keyword id="KW-0547">Nucleotide-binding</keyword>
<keyword id="KW-0539">Nucleus</keyword>
<keyword id="KW-0597">Phosphoprotein</keyword>
<keyword id="KW-1185">Reference proteome</keyword>
<keyword id="KW-0694">RNA-binding</keyword>
<keyword id="KW-0698">rRNA processing</keyword>
<dbReference type="EC" id="3.6.4.13"/>
<dbReference type="EMBL" id="AK010310">
    <property type="protein sequence ID" value="BAB26843.2"/>
    <property type="molecule type" value="mRNA"/>
</dbReference>
<dbReference type="EMBL" id="AK076982">
    <property type="protein sequence ID" value="BAC36547.1"/>
    <property type="molecule type" value="mRNA"/>
</dbReference>
<dbReference type="CCDS" id="CCDS20643.1"/>
<dbReference type="RefSeq" id="NP_080636.2">
    <property type="nucleotide sequence ID" value="NM_026360.3"/>
</dbReference>
<dbReference type="SMR" id="Q9CWX9"/>
<dbReference type="BioGRID" id="212421">
    <property type="interactions" value="12"/>
</dbReference>
<dbReference type="FunCoup" id="Q9CWX9">
    <property type="interactions" value="2940"/>
</dbReference>
<dbReference type="IntAct" id="Q9CWX9">
    <property type="interactions" value="1"/>
</dbReference>
<dbReference type="STRING" id="10090.ENSMUSP00000032326"/>
<dbReference type="GlyGen" id="Q9CWX9">
    <property type="glycosylation" value="1 site, 1 O-linked glycan (1 site)"/>
</dbReference>
<dbReference type="iPTMnet" id="Q9CWX9"/>
<dbReference type="PhosphoSitePlus" id="Q9CWX9"/>
<dbReference type="jPOST" id="Q9CWX9"/>
<dbReference type="PaxDb" id="10090-ENSMUSP00000032326"/>
<dbReference type="ProteomicsDB" id="279903"/>
<dbReference type="Pumba" id="Q9CWX9"/>
<dbReference type="Antibodypedia" id="3114">
    <property type="antibodies" value="199 antibodies from 25 providers"/>
</dbReference>
<dbReference type="DNASU" id="67755"/>
<dbReference type="Ensembl" id="ENSMUST00000032326.11">
    <property type="protein sequence ID" value="ENSMUSP00000032326.5"/>
    <property type="gene ID" value="ENSMUSG00000030204.11"/>
</dbReference>
<dbReference type="GeneID" id="67755"/>
<dbReference type="KEGG" id="mmu:67755"/>
<dbReference type="UCSC" id="uc009eld.2">
    <property type="organism name" value="mouse"/>
</dbReference>
<dbReference type="AGR" id="MGI:1915005"/>
<dbReference type="CTD" id="51202"/>
<dbReference type="MGI" id="MGI:1915005">
    <property type="gene designation" value="Ddx47"/>
</dbReference>
<dbReference type="VEuPathDB" id="HostDB:ENSMUSG00000030204"/>
<dbReference type="eggNOG" id="KOG0330">
    <property type="taxonomic scope" value="Eukaryota"/>
</dbReference>
<dbReference type="GeneTree" id="ENSGT00940000155774"/>
<dbReference type="InParanoid" id="Q9CWX9"/>
<dbReference type="OMA" id="GIGIKCC"/>
<dbReference type="OrthoDB" id="10261904at2759"/>
<dbReference type="PhylomeDB" id="Q9CWX9"/>
<dbReference type="TreeFam" id="TF105714"/>
<dbReference type="Reactome" id="R-MMU-6791226">
    <property type="pathway name" value="Major pathway of rRNA processing in the nucleolus and cytosol"/>
</dbReference>
<dbReference type="BioGRID-ORCS" id="67755">
    <property type="hits" value="27 hits in 82 CRISPR screens"/>
</dbReference>
<dbReference type="ChiTaRS" id="Ddx47">
    <property type="organism name" value="mouse"/>
</dbReference>
<dbReference type="PRO" id="PR:Q9CWX9"/>
<dbReference type="Proteomes" id="UP000000589">
    <property type="component" value="Chromosome 6"/>
</dbReference>
<dbReference type="RNAct" id="Q9CWX9">
    <property type="molecule type" value="protein"/>
</dbReference>
<dbReference type="Bgee" id="ENSMUSG00000030204">
    <property type="expression patterns" value="Expressed in embryonic post-anal tail and 266 other cell types or tissues"/>
</dbReference>
<dbReference type="ExpressionAtlas" id="Q9CWX9">
    <property type="expression patterns" value="baseline and differential"/>
</dbReference>
<dbReference type="GO" id="GO:0005730">
    <property type="term" value="C:nucleolus"/>
    <property type="evidence" value="ECO:0000250"/>
    <property type="project" value="UniProtKB"/>
</dbReference>
<dbReference type="GO" id="GO:0005524">
    <property type="term" value="F:ATP binding"/>
    <property type="evidence" value="ECO:0007669"/>
    <property type="project" value="UniProtKB-KW"/>
</dbReference>
<dbReference type="GO" id="GO:0016887">
    <property type="term" value="F:ATP hydrolysis activity"/>
    <property type="evidence" value="ECO:0007669"/>
    <property type="project" value="RHEA"/>
</dbReference>
<dbReference type="GO" id="GO:0003723">
    <property type="term" value="F:RNA binding"/>
    <property type="evidence" value="ECO:0007669"/>
    <property type="project" value="UniProtKB-KW"/>
</dbReference>
<dbReference type="GO" id="GO:0003724">
    <property type="term" value="F:RNA helicase activity"/>
    <property type="evidence" value="ECO:0007669"/>
    <property type="project" value="UniProtKB-EC"/>
</dbReference>
<dbReference type="GO" id="GO:0008625">
    <property type="term" value="P:extrinsic apoptotic signaling pathway via death domain receptors"/>
    <property type="evidence" value="ECO:0000250"/>
    <property type="project" value="UniProtKB"/>
</dbReference>
<dbReference type="GO" id="GO:0006397">
    <property type="term" value="P:mRNA processing"/>
    <property type="evidence" value="ECO:0007669"/>
    <property type="project" value="UniProtKB-KW"/>
</dbReference>
<dbReference type="GO" id="GO:0008380">
    <property type="term" value="P:RNA splicing"/>
    <property type="evidence" value="ECO:0000250"/>
    <property type="project" value="UniProtKB"/>
</dbReference>
<dbReference type="GO" id="GO:0006364">
    <property type="term" value="P:rRNA processing"/>
    <property type="evidence" value="ECO:0000250"/>
    <property type="project" value="UniProtKB"/>
</dbReference>
<dbReference type="CDD" id="cd17954">
    <property type="entry name" value="DEADc_DDX47"/>
    <property type="match status" value="1"/>
</dbReference>
<dbReference type="CDD" id="cd18787">
    <property type="entry name" value="SF2_C_DEAD"/>
    <property type="match status" value="1"/>
</dbReference>
<dbReference type="FunFam" id="3.40.50.300:FF:000626">
    <property type="entry name" value="probable ATP-dependent RNA helicase DDX47"/>
    <property type="match status" value="1"/>
</dbReference>
<dbReference type="FunFam" id="3.40.50.300:FF:000681">
    <property type="entry name" value="probable ATP-dependent RNA helicase DDX47"/>
    <property type="match status" value="1"/>
</dbReference>
<dbReference type="Gene3D" id="3.40.50.300">
    <property type="entry name" value="P-loop containing nucleotide triphosphate hydrolases"/>
    <property type="match status" value="2"/>
</dbReference>
<dbReference type="InterPro" id="IPR044765">
    <property type="entry name" value="DDX47/Rrp3_DEADc"/>
</dbReference>
<dbReference type="InterPro" id="IPR011545">
    <property type="entry name" value="DEAD/DEAH_box_helicase_dom"/>
</dbReference>
<dbReference type="InterPro" id="IPR050079">
    <property type="entry name" value="DEAD_box_RNA_helicase"/>
</dbReference>
<dbReference type="InterPro" id="IPR014001">
    <property type="entry name" value="Helicase_ATP-bd"/>
</dbReference>
<dbReference type="InterPro" id="IPR001650">
    <property type="entry name" value="Helicase_C-like"/>
</dbReference>
<dbReference type="InterPro" id="IPR027417">
    <property type="entry name" value="P-loop_NTPase"/>
</dbReference>
<dbReference type="InterPro" id="IPR000629">
    <property type="entry name" value="RNA-helicase_DEAD-box_CS"/>
</dbReference>
<dbReference type="InterPro" id="IPR014014">
    <property type="entry name" value="RNA_helicase_DEAD_Q_motif"/>
</dbReference>
<dbReference type="PANTHER" id="PTHR47959">
    <property type="entry name" value="ATP-DEPENDENT RNA HELICASE RHLE-RELATED"/>
    <property type="match status" value="1"/>
</dbReference>
<dbReference type="PANTHER" id="PTHR47959:SF20">
    <property type="entry name" value="RNA HELICASE"/>
    <property type="match status" value="1"/>
</dbReference>
<dbReference type="Pfam" id="PF00270">
    <property type="entry name" value="DEAD"/>
    <property type="match status" value="1"/>
</dbReference>
<dbReference type="Pfam" id="PF00271">
    <property type="entry name" value="Helicase_C"/>
    <property type="match status" value="1"/>
</dbReference>
<dbReference type="SMART" id="SM00487">
    <property type="entry name" value="DEXDc"/>
    <property type="match status" value="1"/>
</dbReference>
<dbReference type="SMART" id="SM00490">
    <property type="entry name" value="HELICc"/>
    <property type="match status" value="1"/>
</dbReference>
<dbReference type="SUPFAM" id="SSF52540">
    <property type="entry name" value="P-loop containing nucleoside triphosphate hydrolases"/>
    <property type="match status" value="1"/>
</dbReference>
<dbReference type="PROSITE" id="PS00039">
    <property type="entry name" value="DEAD_ATP_HELICASE"/>
    <property type="match status" value="1"/>
</dbReference>
<dbReference type="PROSITE" id="PS51192">
    <property type="entry name" value="HELICASE_ATP_BIND_1"/>
    <property type="match status" value="1"/>
</dbReference>
<dbReference type="PROSITE" id="PS51194">
    <property type="entry name" value="HELICASE_CTER"/>
    <property type="match status" value="1"/>
</dbReference>
<dbReference type="PROSITE" id="PS51195">
    <property type="entry name" value="Q_MOTIF"/>
    <property type="match status" value="1"/>
</dbReference>
<evidence type="ECO:0000250" key="1"/>
<evidence type="ECO:0000250" key="2">
    <source>
        <dbReference type="UniProtKB" id="Q9H0S4"/>
    </source>
</evidence>
<evidence type="ECO:0000255" key="3">
    <source>
        <dbReference type="PROSITE-ProRule" id="PRU00541"/>
    </source>
</evidence>
<evidence type="ECO:0000255" key="4">
    <source>
        <dbReference type="PROSITE-ProRule" id="PRU00542"/>
    </source>
</evidence>
<evidence type="ECO:0000256" key="5">
    <source>
        <dbReference type="SAM" id="MobiDB-lite"/>
    </source>
</evidence>
<evidence type="ECO:0000305" key="6"/>
<name>DDX47_MOUSE</name>
<feature type="initiator methionine" description="Removed" evidence="2">
    <location>
        <position position="1"/>
    </location>
</feature>
<feature type="chain" id="PRO_0000055051" description="Probable ATP-dependent RNA helicase DDX47">
    <location>
        <begin position="2"/>
        <end position="455"/>
    </location>
</feature>
<feature type="domain" description="Helicase ATP-binding" evidence="3">
    <location>
        <begin position="55"/>
        <end position="226"/>
    </location>
</feature>
<feature type="domain" description="Helicase C-terminal" evidence="4">
    <location>
        <begin position="237"/>
        <end position="397"/>
    </location>
</feature>
<feature type="region of interest" description="Disordered" evidence="5">
    <location>
        <begin position="1"/>
        <end position="21"/>
    </location>
</feature>
<feature type="region of interest" description="Disordered" evidence="5">
    <location>
        <begin position="412"/>
        <end position="455"/>
    </location>
</feature>
<feature type="short sequence motif" description="Q motif">
    <location>
        <begin position="24"/>
        <end position="52"/>
    </location>
</feature>
<feature type="short sequence motif" description="DEAD box">
    <location>
        <begin position="174"/>
        <end position="177"/>
    </location>
</feature>
<feature type="binding site" evidence="3">
    <location>
        <begin position="68"/>
        <end position="75"/>
    </location>
    <ligand>
        <name>ATP</name>
        <dbReference type="ChEBI" id="CHEBI:30616"/>
    </ligand>
</feature>
<feature type="modified residue" description="N-acetylalanine" evidence="2">
    <location>
        <position position="2"/>
    </location>
</feature>
<feature type="modified residue" description="Phosphoserine" evidence="2">
    <location>
        <position position="9"/>
    </location>
</feature>
<feature type="modified residue" description="Phosphothreonine" evidence="2">
    <location>
        <position position="149"/>
    </location>
</feature>
<reference key="1">
    <citation type="journal article" date="2005" name="Science">
        <title>The transcriptional landscape of the mammalian genome.</title>
        <authorList>
            <person name="Carninci P."/>
            <person name="Kasukawa T."/>
            <person name="Katayama S."/>
            <person name="Gough J."/>
            <person name="Frith M.C."/>
            <person name="Maeda N."/>
            <person name="Oyama R."/>
            <person name="Ravasi T."/>
            <person name="Lenhard B."/>
            <person name="Wells C."/>
            <person name="Kodzius R."/>
            <person name="Shimokawa K."/>
            <person name="Bajic V.B."/>
            <person name="Brenner S.E."/>
            <person name="Batalov S."/>
            <person name="Forrest A.R."/>
            <person name="Zavolan M."/>
            <person name="Davis M.J."/>
            <person name="Wilming L.G."/>
            <person name="Aidinis V."/>
            <person name="Allen J.E."/>
            <person name="Ambesi-Impiombato A."/>
            <person name="Apweiler R."/>
            <person name="Aturaliya R.N."/>
            <person name="Bailey T.L."/>
            <person name="Bansal M."/>
            <person name="Baxter L."/>
            <person name="Beisel K.W."/>
            <person name="Bersano T."/>
            <person name="Bono H."/>
            <person name="Chalk A.M."/>
            <person name="Chiu K.P."/>
            <person name="Choudhary V."/>
            <person name="Christoffels A."/>
            <person name="Clutterbuck D.R."/>
            <person name="Crowe M.L."/>
            <person name="Dalla E."/>
            <person name="Dalrymple B.P."/>
            <person name="de Bono B."/>
            <person name="Della Gatta G."/>
            <person name="di Bernardo D."/>
            <person name="Down T."/>
            <person name="Engstrom P."/>
            <person name="Fagiolini M."/>
            <person name="Faulkner G."/>
            <person name="Fletcher C.F."/>
            <person name="Fukushima T."/>
            <person name="Furuno M."/>
            <person name="Futaki S."/>
            <person name="Gariboldi M."/>
            <person name="Georgii-Hemming P."/>
            <person name="Gingeras T.R."/>
            <person name="Gojobori T."/>
            <person name="Green R.E."/>
            <person name="Gustincich S."/>
            <person name="Harbers M."/>
            <person name="Hayashi Y."/>
            <person name="Hensch T.K."/>
            <person name="Hirokawa N."/>
            <person name="Hill D."/>
            <person name="Huminiecki L."/>
            <person name="Iacono M."/>
            <person name="Ikeo K."/>
            <person name="Iwama A."/>
            <person name="Ishikawa T."/>
            <person name="Jakt M."/>
            <person name="Kanapin A."/>
            <person name="Katoh M."/>
            <person name="Kawasawa Y."/>
            <person name="Kelso J."/>
            <person name="Kitamura H."/>
            <person name="Kitano H."/>
            <person name="Kollias G."/>
            <person name="Krishnan S.P."/>
            <person name="Kruger A."/>
            <person name="Kummerfeld S.K."/>
            <person name="Kurochkin I.V."/>
            <person name="Lareau L.F."/>
            <person name="Lazarevic D."/>
            <person name="Lipovich L."/>
            <person name="Liu J."/>
            <person name="Liuni S."/>
            <person name="McWilliam S."/>
            <person name="Madan Babu M."/>
            <person name="Madera M."/>
            <person name="Marchionni L."/>
            <person name="Matsuda H."/>
            <person name="Matsuzawa S."/>
            <person name="Miki H."/>
            <person name="Mignone F."/>
            <person name="Miyake S."/>
            <person name="Morris K."/>
            <person name="Mottagui-Tabar S."/>
            <person name="Mulder N."/>
            <person name="Nakano N."/>
            <person name="Nakauchi H."/>
            <person name="Ng P."/>
            <person name="Nilsson R."/>
            <person name="Nishiguchi S."/>
            <person name="Nishikawa S."/>
            <person name="Nori F."/>
            <person name="Ohara O."/>
            <person name="Okazaki Y."/>
            <person name="Orlando V."/>
            <person name="Pang K.C."/>
            <person name="Pavan W.J."/>
            <person name="Pavesi G."/>
            <person name="Pesole G."/>
            <person name="Petrovsky N."/>
            <person name="Piazza S."/>
            <person name="Reed J."/>
            <person name="Reid J.F."/>
            <person name="Ring B.Z."/>
            <person name="Ringwald M."/>
            <person name="Rost B."/>
            <person name="Ruan Y."/>
            <person name="Salzberg S.L."/>
            <person name="Sandelin A."/>
            <person name="Schneider C."/>
            <person name="Schoenbach C."/>
            <person name="Sekiguchi K."/>
            <person name="Semple C.A."/>
            <person name="Seno S."/>
            <person name="Sessa L."/>
            <person name="Sheng Y."/>
            <person name="Shibata Y."/>
            <person name="Shimada H."/>
            <person name="Shimada K."/>
            <person name="Silva D."/>
            <person name="Sinclair B."/>
            <person name="Sperling S."/>
            <person name="Stupka E."/>
            <person name="Sugiura K."/>
            <person name="Sultana R."/>
            <person name="Takenaka Y."/>
            <person name="Taki K."/>
            <person name="Tammoja K."/>
            <person name="Tan S.L."/>
            <person name="Tang S."/>
            <person name="Taylor M.S."/>
            <person name="Tegner J."/>
            <person name="Teichmann S.A."/>
            <person name="Ueda H.R."/>
            <person name="van Nimwegen E."/>
            <person name="Verardo R."/>
            <person name="Wei C.L."/>
            <person name="Yagi K."/>
            <person name="Yamanishi H."/>
            <person name="Zabarovsky E."/>
            <person name="Zhu S."/>
            <person name="Zimmer A."/>
            <person name="Hide W."/>
            <person name="Bult C."/>
            <person name="Grimmond S.M."/>
            <person name="Teasdale R.D."/>
            <person name="Liu E.T."/>
            <person name="Brusic V."/>
            <person name="Quackenbush J."/>
            <person name="Wahlestedt C."/>
            <person name="Mattick J.S."/>
            <person name="Hume D.A."/>
            <person name="Kai C."/>
            <person name="Sasaki D."/>
            <person name="Tomaru Y."/>
            <person name="Fukuda S."/>
            <person name="Kanamori-Katayama M."/>
            <person name="Suzuki M."/>
            <person name="Aoki J."/>
            <person name="Arakawa T."/>
            <person name="Iida J."/>
            <person name="Imamura K."/>
            <person name="Itoh M."/>
            <person name="Kato T."/>
            <person name="Kawaji H."/>
            <person name="Kawagashira N."/>
            <person name="Kawashima T."/>
            <person name="Kojima M."/>
            <person name="Kondo S."/>
            <person name="Konno H."/>
            <person name="Nakano K."/>
            <person name="Ninomiya N."/>
            <person name="Nishio T."/>
            <person name="Okada M."/>
            <person name="Plessy C."/>
            <person name="Shibata K."/>
            <person name="Shiraki T."/>
            <person name="Suzuki S."/>
            <person name="Tagami M."/>
            <person name="Waki K."/>
            <person name="Watahiki A."/>
            <person name="Okamura-Oho Y."/>
            <person name="Suzuki H."/>
            <person name="Kawai J."/>
            <person name="Hayashizaki Y."/>
        </authorList>
    </citation>
    <scope>NUCLEOTIDE SEQUENCE [LARGE SCALE MRNA]</scope>
    <source>
        <strain>C57BL/6J</strain>
        <tissue>Testis</tissue>
    </source>
</reference>
<proteinExistence type="evidence at transcript level"/>
<sequence>MAADEEPDSPSGALQTAAEEEETKTFKDLGVTDVLCEACDQLGWAKPTKIQIEAIPLALQGRDIIGLAETGSGKTGAFALPILNALLETPQRLFALVLTPTRELAFQISEQFEALGSSIGVQCAVIVGGIDSMSQSLALAKKPHIVIATPGRLIDHLENTKGFNLRALKYLVMDEADRILNMDFETEVDKILKVIPRDRKTFLFSATMTKKVQKLQRAALKNPVKCAVSSKYQTVEKLQQYYLFIPSKFKDTYLVYILNELAGNSFMIFCSTCNNTQRTALLLRNLGFTAIPLHGQMSQSKRLGSLNKFKAKARSILLATDVASRGLDIPHVDVVVNFDIPTHSKDYIHRVGRTARAGRSGKAITFVTQYDVELFQRIEHLIGKKLPVFPTQDEEVMMLTERVNEAQRFARMELREHGEKKKRKREDAGDDDDKEGAIGVRNKVAGGKMKKRKGR</sequence>
<protein>
    <recommendedName>
        <fullName>Probable ATP-dependent RNA helicase DDX47</fullName>
        <ecNumber>3.6.4.13</ecNumber>
    </recommendedName>
    <alternativeName>
        <fullName>DEAD box protein 47</fullName>
    </alternativeName>
</protein>
<comment type="function">
    <text evidence="1">Involved in apoptosis. May have a role in rRNA processing and mRNA splicing. Associates with pre-rRNA precursors (By similarity).</text>
</comment>
<comment type="catalytic activity">
    <reaction>
        <text>ATP + H2O = ADP + phosphate + H(+)</text>
        <dbReference type="Rhea" id="RHEA:13065"/>
        <dbReference type="ChEBI" id="CHEBI:15377"/>
        <dbReference type="ChEBI" id="CHEBI:15378"/>
        <dbReference type="ChEBI" id="CHEBI:30616"/>
        <dbReference type="ChEBI" id="CHEBI:43474"/>
        <dbReference type="ChEBI" id="CHEBI:456216"/>
        <dbReference type="EC" id="3.6.4.13"/>
    </reaction>
</comment>
<comment type="subunit">
    <text evidence="1">Interacts with AGO1 and AGO2. Interacts with GABARAP. Interacts with NOL8; the interaction is RNA-dependent (By similarity).</text>
</comment>
<comment type="subcellular location">
    <subcellularLocation>
        <location evidence="1">Nucleus</location>
        <location evidence="1">Nucleolus</location>
    </subcellularLocation>
    <text evidence="1">Localizes in the nucleolar-organizing region during ribosome biogenesis.</text>
</comment>
<comment type="similarity">
    <text evidence="6">Belongs to the DEAD box helicase family. DDX47/RRP3 subfamily.</text>
</comment>
<accession>Q9CWX9</accession>
<gene>
    <name type="primary">Ddx47</name>
</gene>
<organism>
    <name type="scientific">Mus musculus</name>
    <name type="common">Mouse</name>
    <dbReference type="NCBI Taxonomy" id="10090"/>
    <lineage>
        <taxon>Eukaryota</taxon>
        <taxon>Metazoa</taxon>
        <taxon>Chordata</taxon>
        <taxon>Craniata</taxon>
        <taxon>Vertebrata</taxon>
        <taxon>Euteleostomi</taxon>
        <taxon>Mammalia</taxon>
        <taxon>Eutheria</taxon>
        <taxon>Euarchontoglires</taxon>
        <taxon>Glires</taxon>
        <taxon>Rodentia</taxon>
        <taxon>Myomorpha</taxon>
        <taxon>Muroidea</taxon>
        <taxon>Muridae</taxon>
        <taxon>Murinae</taxon>
        <taxon>Mus</taxon>
        <taxon>Mus</taxon>
    </lineage>
</organism>